<name>FBX42_HUMAN</name>
<accession>Q6P3S6</accession>
<accession>B3KP30</accession>
<accession>Q5TEU8</accession>
<accession>Q86XI0</accession>
<accession>Q8N3N4</accession>
<accession>Q8N5F8</accession>
<accession>Q9BRM0</accession>
<accession>Q9P2L4</accession>
<comment type="function">
    <text evidence="6">Substrate-recognition component of some SCF (SKP1-CUL1-F-box protein)-type E3 ubiquitin ligase complex. Specifically recognizes p53/TP53, promoting its ubiquitination and degradation.</text>
</comment>
<comment type="subunit">
    <text evidence="6">Component of some SCF complex, composed of CUL1, SKP1, RBX1 and FBXO42. Interacts (via the kelch domain) with p53/TP53; interaction is direct.</text>
</comment>
<comment type="interaction">
    <interactant intactId="EBI-2506081">
        <id>Q6P3S6</id>
    </interactant>
    <interactant intactId="EBI-10968534">
        <id>P50570-2</id>
        <label>DNM2</label>
    </interactant>
    <organismsDiffer>false</organismsDiffer>
    <experiments>3</experiments>
</comment>
<comment type="interaction">
    <interactant intactId="EBI-2506081">
        <id>Q6P3S6</id>
    </interactant>
    <interactant intactId="EBI-1044067">
        <id>P49840</id>
        <label>GSK3A</label>
    </interactant>
    <organismsDiffer>false</organismsDiffer>
    <experiments>3</experiments>
</comment>
<comment type="interaction">
    <interactant intactId="EBI-2506081">
        <id>Q6P3S6</id>
    </interactant>
    <interactant intactId="EBI-748312">
        <id>P49821</id>
        <label>NDUFV1</label>
    </interactant>
    <organismsDiffer>false</organismsDiffer>
    <experiments>3</experiments>
</comment>
<comment type="interaction">
    <interactant intactId="EBI-2506081">
        <id>Q6P3S6</id>
    </interactant>
    <interactant intactId="EBI-632552">
        <id>Q06330</id>
        <label>RBPJ</label>
    </interactant>
    <organismsDiffer>false</organismsDiffer>
    <experiments>5</experiments>
</comment>
<comment type="interaction">
    <interactant intactId="EBI-2506081">
        <id>Q6P3S6</id>
    </interactant>
    <interactant intactId="EBI-2800203">
        <id>O14773</id>
        <label>TPP1</label>
    </interactant>
    <organismsDiffer>false</organismsDiffer>
    <experiments>3</experiments>
</comment>
<comment type="interaction">
    <interactant intactId="EBI-2506081">
        <id>Q6P3S6</id>
    </interactant>
    <interactant intactId="EBI-720609">
        <id>O76024</id>
        <label>WFS1</label>
    </interactant>
    <organismsDiffer>false</organismsDiffer>
    <experiments>3</experiments>
</comment>
<dbReference type="EMBL" id="AK055598">
    <property type="protein sequence ID" value="BAG51542.1"/>
    <property type="molecule type" value="mRNA"/>
</dbReference>
<dbReference type="EMBL" id="AL109627">
    <property type="status" value="NOT_ANNOTATED_CDS"/>
    <property type="molecule type" value="Genomic_DNA"/>
</dbReference>
<dbReference type="EMBL" id="AL358794">
    <property type="status" value="NOT_ANNOTATED_CDS"/>
    <property type="molecule type" value="Genomic_DNA"/>
</dbReference>
<dbReference type="EMBL" id="BC006174">
    <property type="protein sequence ID" value="AAH06174.1"/>
    <property type="molecule type" value="mRNA"/>
</dbReference>
<dbReference type="EMBL" id="BC032439">
    <property type="protein sequence ID" value="AAH32439.1"/>
    <property type="molecule type" value="mRNA"/>
</dbReference>
<dbReference type="EMBL" id="BC043410">
    <property type="protein sequence ID" value="AAH43410.1"/>
    <property type="molecule type" value="mRNA"/>
</dbReference>
<dbReference type="EMBL" id="BC063864">
    <property type="protein sequence ID" value="AAH63864.1"/>
    <property type="molecule type" value="mRNA"/>
</dbReference>
<dbReference type="EMBL" id="AB037753">
    <property type="protein sequence ID" value="BAA92570.1"/>
    <property type="molecule type" value="mRNA"/>
</dbReference>
<dbReference type="EMBL" id="AL833874">
    <property type="protein sequence ID" value="CAD38731.1"/>
    <property type="molecule type" value="mRNA"/>
</dbReference>
<dbReference type="CCDS" id="CCDS30613.1"/>
<dbReference type="RefSeq" id="NP_061867.1">
    <property type="nucleotide sequence ID" value="NM_018994.3"/>
</dbReference>
<dbReference type="RefSeq" id="XP_006710761.1">
    <property type="nucleotide sequence ID" value="XM_006710698.3"/>
</dbReference>
<dbReference type="RefSeq" id="XP_047278703.1">
    <property type="nucleotide sequence ID" value="XM_047422747.1"/>
</dbReference>
<dbReference type="RefSeq" id="XP_047278706.1">
    <property type="nucleotide sequence ID" value="XM_047422750.1"/>
</dbReference>
<dbReference type="RefSeq" id="XP_047278707.1">
    <property type="nucleotide sequence ID" value="XM_047422751.1"/>
</dbReference>
<dbReference type="RefSeq" id="XP_054188784.1">
    <property type="nucleotide sequence ID" value="XM_054332809.1"/>
</dbReference>
<dbReference type="RefSeq" id="XP_054188785.1">
    <property type="nucleotide sequence ID" value="XM_054332810.1"/>
</dbReference>
<dbReference type="RefSeq" id="XP_054188786.1">
    <property type="nucleotide sequence ID" value="XM_054332811.1"/>
</dbReference>
<dbReference type="SMR" id="Q6P3S6"/>
<dbReference type="BioGRID" id="119962">
    <property type="interactions" value="260"/>
</dbReference>
<dbReference type="ComplexPortal" id="CPX-7983">
    <property type="entry name" value="SCF E3 ubiquitin ligase complex, FBXO42 variant"/>
</dbReference>
<dbReference type="FunCoup" id="Q6P3S6">
    <property type="interactions" value="490"/>
</dbReference>
<dbReference type="IntAct" id="Q6P3S6">
    <property type="interactions" value="20"/>
</dbReference>
<dbReference type="MINT" id="Q6P3S6"/>
<dbReference type="STRING" id="9606.ENSP00000364742"/>
<dbReference type="GlyConnect" id="2039">
    <property type="glycosylation" value="1 N-Linked glycan (1 site)"/>
</dbReference>
<dbReference type="GlyCosmos" id="Q6P3S6">
    <property type="glycosylation" value="1 site, 2 glycans"/>
</dbReference>
<dbReference type="GlyGen" id="Q6P3S6">
    <property type="glycosylation" value="2 sites, 3 N-linked glycans (1 site)"/>
</dbReference>
<dbReference type="iPTMnet" id="Q6P3S6"/>
<dbReference type="PhosphoSitePlus" id="Q6P3S6"/>
<dbReference type="BioMuta" id="FBXO42"/>
<dbReference type="DMDM" id="51701398"/>
<dbReference type="jPOST" id="Q6P3S6"/>
<dbReference type="MassIVE" id="Q6P3S6"/>
<dbReference type="PaxDb" id="9606-ENSP00000364742"/>
<dbReference type="PeptideAtlas" id="Q6P3S6"/>
<dbReference type="ProteomicsDB" id="66931"/>
<dbReference type="Pumba" id="Q6P3S6"/>
<dbReference type="Antibodypedia" id="14535">
    <property type="antibodies" value="326 antibodies from 21 providers"/>
</dbReference>
<dbReference type="DNASU" id="54455"/>
<dbReference type="Ensembl" id="ENST00000375592.8">
    <property type="protein sequence ID" value="ENSP00000364742.3"/>
    <property type="gene ID" value="ENSG00000037637.11"/>
</dbReference>
<dbReference type="Ensembl" id="ENST00000707355.1">
    <property type="protein sequence ID" value="ENSP00000516839.1"/>
    <property type="gene ID" value="ENSG00000291375.1"/>
</dbReference>
<dbReference type="GeneID" id="54455"/>
<dbReference type="KEGG" id="hsa:54455"/>
<dbReference type="MANE-Select" id="ENST00000375592.8">
    <property type="protein sequence ID" value="ENSP00000364742.3"/>
    <property type="RefSeq nucleotide sequence ID" value="NM_018994.3"/>
    <property type="RefSeq protein sequence ID" value="NP_061867.1"/>
</dbReference>
<dbReference type="UCSC" id="uc001ayg.4">
    <property type="organism name" value="human"/>
</dbReference>
<dbReference type="AGR" id="HGNC:29249"/>
<dbReference type="CTD" id="54455"/>
<dbReference type="DisGeNET" id="54455"/>
<dbReference type="GeneCards" id="FBXO42"/>
<dbReference type="HGNC" id="HGNC:29249">
    <property type="gene designation" value="FBXO42"/>
</dbReference>
<dbReference type="HPA" id="ENSG00000037637">
    <property type="expression patterns" value="Low tissue specificity"/>
</dbReference>
<dbReference type="MIM" id="609109">
    <property type="type" value="gene"/>
</dbReference>
<dbReference type="neXtProt" id="NX_Q6P3S6"/>
<dbReference type="OpenTargets" id="ENSG00000037637"/>
<dbReference type="PharmGKB" id="PA134951560"/>
<dbReference type="VEuPathDB" id="HostDB:ENSG00000037637"/>
<dbReference type="eggNOG" id="KOG0379">
    <property type="taxonomic scope" value="Eukaryota"/>
</dbReference>
<dbReference type="GeneTree" id="ENSGT00440000039706"/>
<dbReference type="HOGENOM" id="CLU_023579_0_0_1"/>
<dbReference type="InParanoid" id="Q6P3S6"/>
<dbReference type="OMA" id="AWLLHIH"/>
<dbReference type="OrthoDB" id="9973021at2759"/>
<dbReference type="PAN-GO" id="Q6P3S6">
    <property type="GO annotations" value="2 GO annotations based on evolutionary models"/>
</dbReference>
<dbReference type="PhylomeDB" id="Q6P3S6"/>
<dbReference type="TreeFam" id="TF324505"/>
<dbReference type="PathwayCommons" id="Q6P3S6"/>
<dbReference type="SignaLink" id="Q6P3S6"/>
<dbReference type="BioGRID-ORCS" id="54455">
    <property type="hits" value="144 hits in 1207 CRISPR screens"/>
</dbReference>
<dbReference type="ChiTaRS" id="FBXO42">
    <property type="organism name" value="human"/>
</dbReference>
<dbReference type="GenomeRNAi" id="54455"/>
<dbReference type="Pharos" id="Q6P3S6">
    <property type="development level" value="Tbio"/>
</dbReference>
<dbReference type="PRO" id="PR:Q6P3S6"/>
<dbReference type="Proteomes" id="UP000005640">
    <property type="component" value="Chromosome 1"/>
</dbReference>
<dbReference type="RNAct" id="Q6P3S6">
    <property type="molecule type" value="protein"/>
</dbReference>
<dbReference type="Bgee" id="ENSG00000037637">
    <property type="expression patterns" value="Expressed in hair follicle and 210 other cell types or tissues"/>
</dbReference>
<dbReference type="ExpressionAtlas" id="Q6P3S6">
    <property type="expression patterns" value="baseline and differential"/>
</dbReference>
<dbReference type="GO" id="GO:0019005">
    <property type="term" value="C:SCF ubiquitin ligase complex"/>
    <property type="evidence" value="ECO:0000318"/>
    <property type="project" value="GO_Central"/>
</dbReference>
<dbReference type="GO" id="GO:1990756">
    <property type="term" value="F:ubiquitin-like ligase-substrate adaptor activity"/>
    <property type="evidence" value="ECO:0000318"/>
    <property type="project" value="GO_Central"/>
</dbReference>
<dbReference type="CDD" id="cd22110">
    <property type="entry name" value="F-box_FBXO42"/>
    <property type="match status" value="1"/>
</dbReference>
<dbReference type="Gene3D" id="1.20.1280.50">
    <property type="match status" value="1"/>
</dbReference>
<dbReference type="Gene3D" id="2.120.10.80">
    <property type="entry name" value="Kelch-type beta propeller"/>
    <property type="match status" value="1"/>
</dbReference>
<dbReference type="InterPro" id="IPR036047">
    <property type="entry name" value="F-box-like_dom_sf"/>
</dbReference>
<dbReference type="InterPro" id="IPR001810">
    <property type="entry name" value="F-box_dom"/>
</dbReference>
<dbReference type="InterPro" id="IPR052821">
    <property type="entry name" value="F-box_only_SRC"/>
</dbReference>
<dbReference type="InterPro" id="IPR015915">
    <property type="entry name" value="Kelch-typ_b-propeller"/>
</dbReference>
<dbReference type="PANTHER" id="PTHR46432">
    <property type="entry name" value="F-BOX ONLY PROTEIN 42"/>
    <property type="match status" value="1"/>
</dbReference>
<dbReference type="PANTHER" id="PTHR46432:SF1">
    <property type="entry name" value="F-BOX ONLY PROTEIN 42"/>
    <property type="match status" value="1"/>
</dbReference>
<dbReference type="Pfam" id="PF12937">
    <property type="entry name" value="F-box-like"/>
    <property type="match status" value="1"/>
</dbReference>
<dbReference type="Pfam" id="PF13415">
    <property type="entry name" value="Kelch_3"/>
    <property type="match status" value="1"/>
</dbReference>
<dbReference type="Pfam" id="PF24681">
    <property type="entry name" value="Kelch_KLHDC2_KLHL20_DRC7"/>
    <property type="match status" value="1"/>
</dbReference>
<dbReference type="SMART" id="SM00256">
    <property type="entry name" value="FBOX"/>
    <property type="match status" value="1"/>
</dbReference>
<dbReference type="SUPFAM" id="SSF81383">
    <property type="entry name" value="F-box domain"/>
    <property type="match status" value="1"/>
</dbReference>
<dbReference type="SUPFAM" id="SSF117281">
    <property type="entry name" value="Kelch motif"/>
    <property type="match status" value="1"/>
</dbReference>
<dbReference type="PROSITE" id="PS50181">
    <property type="entry name" value="FBOX"/>
    <property type="match status" value="1"/>
</dbReference>
<organism>
    <name type="scientific">Homo sapiens</name>
    <name type="common">Human</name>
    <dbReference type="NCBI Taxonomy" id="9606"/>
    <lineage>
        <taxon>Eukaryota</taxon>
        <taxon>Metazoa</taxon>
        <taxon>Chordata</taxon>
        <taxon>Craniata</taxon>
        <taxon>Vertebrata</taxon>
        <taxon>Euteleostomi</taxon>
        <taxon>Mammalia</taxon>
        <taxon>Eutheria</taxon>
        <taxon>Euarchontoglires</taxon>
        <taxon>Primates</taxon>
        <taxon>Haplorrhini</taxon>
        <taxon>Catarrhini</taxon>
        <taxon>Hominidae</taxon>
        <taxon>Homo</taxon>
    </lineage>
</organism>
<sequence length="717" mass="77839">MASSSDSEDDSFMAVDQEETVLEGTMDQDEEPHPVLEAEETRHNRSMSELPEEVLEYILSFLSPYQEHKTAALVCKQWYRLIKGVAHQCYHGFMKAVQEGNIQWESRTYPYPGTPITQRFSHSACYYDANQSMYVFGGCTQSSCNAAFNDLWRLDLNSKEWIRPLASGSYPSPKAGATLVVYKDLLVLFGGWTRPSPYPLHQPERFFDEIHTYSPSKNWWNCIVTTHGPPPMAGHSSCVIDDKMIVFGGSLGSRQMSNDVWVLDLEQWAWSKPNISGPSPHPRGGQSQIVIDDATILILGGCGGPNALFKDAWLLHMHSGPWAWQPLKVENEEHGAPELWCHPACRVGQCVVVFSQAPSGRAPLSPSLNSRPSPISATPPALVPETREYRSQSPVRSMDEAPCVNGRWGTLRPRAQRQTPSGSREGSLSPARGDGSPILNGGSLSPGTAAVGGSSLDSPVQAISPSTPSAPEGYDLKIGLSLAPRRGSLPDQKDLRLGSIDLNWDLKPASSSNPMDGMDNRTVGGSMRHPPEQTNGVHTPPHVASALAGAVSPGALRRSLEAIKAMSSKGPSASAALSPPLGSSPGSPGSQSLSSGETVPIPRPGPAQGDGHSLPPIARRLGHHPPQSLNVGKPLYQSMNCKPMQMYVLDIKDTKEKGRVKWKVFNSSSVVGPPETSLHTVVQGRGELIIFGGLMDKKQNVKYYPKTNALYFVRAKR</sequence>
<feature type="chain" id="PRO_0000119942" description="F-box only protein 42">
    <location>
        <begin position="1"/>
        <end position="717"/>
    </location>
</feature>
<feature type="domain" description="F-box" evidence="1">
    <location>
        <begin position="44"/>
        <end position="93"/>
    </location>
</feature>
<feature type="repeat" description="Kelch 1">
    <location>
        <begin position="132"/>
        <end position="184"/>
    </location>
</feature>
<feature type="repeat" description="Kelch 2">
    <location>
        <begin position="186"/>
        <end position="242"/>
    </location>
</feature>
<feature type="repeat" description="Kelch 3">
    <location>
        <begin position="244"/>
        <end position="293"/>
    </location>
</feature>
<feature type="repeat" description="Kelch 4">
    <location>
        <begin position="295"/>
        <end position="342"/>
    </location>
</feature>
<feature type="region of interest" description="Disordered" evidence="2">
    <location>
        <begin position="1"/>
        <end position="34"/>
    </location>
</feature>
<feature type="region of interest" description="Disordered" evidence="2">
    <location>
        <begin position="361"/>
        <end position="474"/>
    </location>
</feature>
<feature type="region of interest" description="Disordered" evidence="2">
    <location>
        <begin position="570"/>
        <end position="631"/>
    </location>
</feature>
<feature type="compositionally biased region" description="Acidic residues" evidence="2">
    <location>
        <begin position="1"/>
        <end position="30"/>
    </location>
</feature>
<feature type="compositionally biased region" description="Low complexity" evidence="2">
    <location>
        <begin position="363"/>
        <end position="376"/>
    </location>
</feature>
<feature type="compositionally biased region" description="Polar residues" evidence="2">
    <location>
        <begin position="416"/>
        <end position="426"/>
    </location>
</feature>
<feature type="compositionally biased region" description="Polar residues" evidence="2">
    <location>
        <begin position="455"/>
        <end position="469"/>
    </location>
</feature>
<feature type="compositionally biased region" description="Low complexity" evidence="2">
    <location>
        <begin position="570"/>
        <end position="596"/>
    </location>
</feature>
<feature type="modified residue" description="Phosphoserine" evidence="8 11">
    <location>
        <position position="365"/>
    </location>
</feature>
<feature type="modified residue" description="Phosphoserine" evidence="8 9 11">
    <location>
        <position position="373"/>
    </location>
</feature>
<feature type="modified residue" description="Phosphothreonine" evidence="8">
    <location>
        <position position="378"/>
    </location>
</feature>
<feature type="modified residue" description="Phosphoserine" evidence="10">
    <location>
        <position position="552"/>
    </location>
</feature>
<feature type="sequence variant" id="VAR_024447" description="In dbSNP:rs12069239." evidence="3 4 5">
    <original>P</original>
    <variation>A</variation>
    <location>
        <position position="471"/>
    </location>
</feature>
<feature type="sequence conflict" description="In Ref. 3; AAH43410." evidence="7" ref="3">
    <location>
        <position position="454"/>
    </location>
</feature>
<feature type="sequence conflict" description="In Ref. 5; CAD38731." evidence="7" ref="5">
    <original>A</original>
    <variation>T</variation>
    <location>
        <position position="509"/>
    </location>
</feature>
<evidence type="ECO:0000255" key="1">
    <source>
        <dbReference type="PROSITE-ProRule" id="PRU00080"/>
    </source>
</evidence>
<evidence type="ECO:0000256" key="2">
    <source>
        <dbReference type="SAM" id="MobiDB-lite"/>
    </source>
</evidence>
<evidence type="ECO:0000269" key="3">
    <source>
    </source>
</evidence>
<evidence type="ECO:0000269" key="4">
    <source>
    </source>
</evidence>
<evidence type="ECO:0000269" key="5">
    <source>
    </source>
</evidence>
<evidence type="ECO:0000269" key="6">
    <source>
    </source>
</evidence>
<evidence type="ECO:0000305" key="7"/>
<evidence type="ECO:0007744" key="8">
    <source>
    </source>
</evidence>
<evidence type="ECO:0007744" key="9">
    <source>
    </source>
</evidence>
<evidence type="ECO:0007744" key="10">
    <source>
    </source>
</evidence>
<evidence type="ECO:0007744" key="11">
    <source>
    </source>
</evidence>
<reference key="1">
    <citation type="journal article" date="2004" name="Nat. Genet.">
        <title>Complete sequencing and characterization of 21,243 full-length human cDNAs.</title>
        <authorList>
            <person name="Ota T."/>
            <person name="Suzuki Y."/>
            <person name="Nishikawa T."/>
            <person name="Otsuki T."/>
            <person name="Sugiyama T."/>
            <person name="Irie R."/>
            <person name="Wakamatsu A."/>
            <person name="Hayashi K."/>
            <person name="Sato H."/>
            <person name="Nagai K."/>
            <person name="Kimura K."/>
            <person name="Makita H."/>
            <person name="Sekine M."/>
            <person name="Obayashi M."/>
            <person name="Nishi T."/>
            <person name="Shibahara T."/>
            <person name="Tanaka T."/>
            <person name="Ishii S."/>
            <person name="Yamamoto J."/>
            <person name="Saito K."/>
            <person name="Kawai Y."/>
            <person name="Isono Y."/>
            <person name="Nakamura Y."/>
            <person name="Nagahari K."/>
            <person name="Murakami K."/>
            <person name="Yasuda T."/>
            <person name="Iwayanagi T."/>
            <person name="Wagatsuma M."/>
            <person name="Shiratori A."/>
            <person name="Sudo H."/>
            <person name="Hosoiri T."/>
            <person name="Kaku Y."/>
            <person name="Kodaira H."/>
            <person name="Kondo H."/>
            <person name="Sugawara M."/>
            <person name="Takahashi M."/>
            <person name="Kanda K."/>
            <person name="Yokoi T."/>
            <person name="Furuya T."/>
            <person name="Kikkawa E."/>
            <person name="Omura Y."/>
            <person name="Abe K."/>
            <person name="Kamihara K."/>
            <person name="Katsuta N."/>
            <person name="Sato K."/>
            <person name="Tanikawa M."/>
            <person name="Yamazaki M."/>
            <person name="Ninomiya K."/>
            <person name="Ishibashi T."/>
            <person name="Yamashita H."/>
            <person name="Murakawa K."/>
            <person name="Fujimori K."/>
            <person name="Tanai H."/>
            <person name="Kimata M."/>
            <person name="Watanabe M."/>
            <person name="Hiraoka S."/>
            <person name="Chiba Y."/>
            <person name="Ishida S."/>
            <person name="Ono Y."/>
            <person name="Takiguchi S."/>
            <person name="Watanabe S."/>
            <person name="Yosida M."/>
            <person name="Hotuta T."/>
            <person name="Kusano J."/>
            <person name="Kanehori K."/>
            <person name="Takahashi-Fujii A."/>
            <person name="Hara H."/>
            <person name="Tanase T.-O."/>
            <person name="Nomura Y."/>
            <person name="Togiya S."/>
            <person name="Komai F."/>
            <person name="Hara R."/>
            <person name="Takeuchi K."/>
            <person name="Arita M."/>
            <person name="Imose N."/>
            <person name="Musashino K."/>
            <person name="Yuuki H."/>
            <person name="Oshima A."/>
            <person name="Sasaki N."/>
            <person name="Aotsuka S."/>
            <person name="Yoshikawa Y."/>
            <person name="Matsunawa H."/>
            <person name="Ichihara T."/>
            <person name="Shiohata N."/>
            <person name="Sano S."/>
            <person name="Moriya S."/>
            <person name="Momiyama H."/>
            <person name="Satoh N."/>
            <person name="Takami S."/>
            <person name="Terashima Y."/>
            <person name="Suzuki O."/>
            <person name="Nakagawa S."/>
            <person name="Senoh A."/>
            <person name="Mizoguchi H."/>
            <person name="Goto Y."/>
            <person name="Shimizu F."/>
            <person name="Wakebe H."/>
            <person name="Hishigaki H."/>
            <person name="Watanabe T."/>
            <person name="Sugiyama A."/>
            <person name="Takemoto M."/>
            <person name="Kawakami B."/>
            <person name="Yamazaki M."/>
            <person name="Watanabe K."/>
            <person name="Kumagai A."/>
            <person name="Itakura S."/>
            <person name="Fukuzumi Y."/>
            <person name="Fujimori Y."/>
            <person name="Komiyama M."/>
            <person name="Tashiro H."/>
            <person name="Tanigami A."/>
            <person name="Fujiwara T."/>
            <person name="Ono T."/>
            <person name="Yamada K."/>
            <person name="Fujii Y."/>
            <person name="Ozaki K."/>
            <person name="Hirao M."/>
            <person name="Ohmori Y."/>
            <person name="Kawabata A."/>
            <person name="Hikiji T."/>
            <person name="Kobatake N."/>
            <person name="Inagaki H."/>
            <person name="Ikema Y."/>
            <person name="Okamoto S."/>
            <person name="Okitani R."/>
            <person name="Kawakami T."/>
            <person name="Noguchi S."/>
            <person name="Itoh T."/>
            <person name="Shigeta K."/>
            <person name="Senba T."/>
            <person name="Matsumura K."/>
            <person name="Nakajima Y."/>
            <person name="Mizuno T."/>
            <person name="Morinaga M."/>
            <person name="Sasaki M."/>
            <person name="Togashi T."/>
            <person name="Oyama M."/>
            <person name="Hata H."/>
            <person name="Watanabe M."/>
            <person name="Komatsu T."/>
            <person name="Mizushima-Sugano J."/>
            <person name="Satoh T."/>
            <person name="Shirai Y."/>
            <person name="Takahashi Y."/>
            <person name="Nakagawa K."/>
            <person name="Okumura K."/>
            <person name="Nagase T."/>
            <person name="Nomura N."/>
            <person name="Kikuchi H."/>
            <person name="Masuho Y."/>
            <person name="Yamashita R."/>
            <person name="Nakai K."/>
            <person name="Yada T."/>
            <person name="Nakamura Y."/>
            <person name="Ohara O."/>
            <person name="Isogai T."/>
            <person name="Sugano S."/>
        </authorList>
    </citation>
    <scope>NUCLEOTIDE SEQUENCE [LARGE SCALE MRNA]</scope>
    <scope>VARIANT ALA-471</scope>
</reference>
<reference key="2">
    <citation type="journal article" date="2006" name="Nature">
        <title>The DNA sequence and biological annotation of human chromosome 1.</title>
        <authorList>
            <person name="Gregory S.G."/>
            <person name="Barlow K.F."/>
            <person name="McLay K.E."/>
            <person name="Kaul R."/>
            <person name="Swarbreck D."/>
            <person name="Dunham A."/>
            <person name="Scott C.E."/>
            <person name="Howe K.L."/>
            <person name="Woodfine K."/>
            <person name="Spencer C.C.A."/>
            <person name="Jones M.C."/>
            <person name="Gillson C."/>
            <person name="Searle S."/>
            <person name="Zhou Y."/>
            <person name="Kokocinski F."/>
            <person name="McDonald L."/>
            <person name="Evans R."/>
            <person name="Phillips K."/>
            <person name="Atkinson A."/>
            <person name="Cooper R."/>
            <person name="Jones C."/>
            <person name="Hall R.E."/>
            <person name="Andrews T.D."/>
            <person name="Lloyd C."/>
            <person name="Ainscough R."/>
            <person name="Almeida J.P."/>
            <person name="Ambrose K.D."/>
            <person name="Anderson F."/>
            <person name="Andrew R.W."/>
            <person name="Ashwell R.I.S."/>
            <person name="Aubin K."/>
            <person name="Babbage A.K."/>
            <person name="Bagguley C.L."/>
            <person name="Bailey J."/>
            <person name="Beasley H."/>
            <person name="Bethel G."/>
            <person name="Bird C.P."/>
            <person name="Bray-Allen S."/>
            <person name="Brown J.Y."/>
            <person name="Brown A.J."/>
            <person name="Buckley D."/>
            <person name="Burton J."/>
            <person name="Bye J."/>
            <person name="Carder C."/>
            <person name="Chapman J.C."/>
            <person name="Clark S.Y."/>
            <person name="Clarke G."/>
            <person name="Clee C."/>
            <person name="Cobley V."/>
            <person name="Collier R.E."/>
            <person name="Corby N."/>
            <person name="Coville G.J."/>
            <person name="Davies J."/>
            <person name="Deadman R."/>
            <person name="Dunn M."/>
            <person name="Earthrowl M."/>
            <person name="Ellington A.G."/>
            <person name="Errington H."/>
            <person name="Frankish A."/>
            <person name="Frankland J."/>
            <person name="French L."/>
            <person name="Garner P."/>
            <person name="Garnett J."/>
            <person name="Gay L."/>
            <person name="Ghori M.R.J."/>
            <person name="Gibson R."/>
            <person name="Gilby L.M."/>
            <person name="Gillett W."/>
            <person name="Glithero R.J."/>
            <person name="Grafham D.V."/>
            <person name="Griffiths C."/>
            <person name="Griffiths-Jones S."/>
            <person name="Grocock R."/>
            <person name="Hammond S."/>
            <person name="Harrison E.S.I."/>
            <person name="Hart E."/>
            <person name="Haugen E."/>
            <person name="Heath P.D."/>
            <person name="Holmes S."/>
            <person name="Holt K."/>
            <person name="Howden P.J."/>
            <person name="Hunt A.R."/>
            <person name="Hunt S.E."/>
            <person name="Hunter G."/>
            <person name="Isherwood J."/>
            <person name="James R."/>
            <person name="Johnson C."/>
            <person name="Johnson D."/>
            <person name="Joy A."/>
            <person name="Kay M."/>
            <person name="Kershaw J.K."/>
            <person name="Kibukawa M."/>
            <person name="Kimberley A.M."/>
            <person name="King A."/>
            <person name="Knights A.J."/>
            <person name="Lad H."/>
            <person name="Laird G."/>
            <person name="Lawlor S."/>
            <person name="Leongamornlert D.A."/>
            <person name="Lloyd D.M."/>
            <person name="Loveland J."/>
            <person name="Lovell J."/>
            <person name="Lush M.J."/>
            <person name="Lyne R."/>
            <person name="Martin S."/>
            <person name="Mashreghi-Mohammadi M."/>
            <person name="Matthews L."/>
            <person name="Matthews N.S.W."/>
            <person name="McLaren S."/>
            <person name="Milne S."/>
            <person name="Mistry S."/>
            <person name="Moore M.J.F."/>
            <person name="Nickerson T."/>
            <person name="O'Dell C.N."/>
            <person name="Oliver K."/>
            <person name="Palmeiri A."/>
            <person name="Palmer S.A."/>
            <person name="Parker A."/>
            <person name="Patel D."/>
            <person name="Pearce A.V."/>
            <person name="Peck A.I."/>
            <person name="Pelan S."/>
            <person name="Phelps K."/>
            <person name="Phillimore B.J."/>
            <person name="Plumb R."/>
            <person name="Rajan J."/>
            <person name="Raymond C."/>
            <person name="Rouse G."/>
            <person name="Saenphimmachak C."/>
            <person name="Sehra H.K."/>
            <person name="Sheridan E."/>
            <person name="Shownkeen R."/>
            <person name="Sims S."/>
            <person name="Skuce C.D."/>
            <person name="Smith M."/>
            <person name="Steward C."/>
            <person name="Subramanian S."/>
            <person name="Sycamore N."/>
            <person name="Tracey A."/>
            <person name="Tromans A."/>
            <person name="Van Helmond Z."/>
            <person name="Wall M."/>
            <person name="Wallis J.M."/>
            <person name="White S."/>
            <person name="Whitehead S.L."/>
            <person name="Wilkinson J.E."/>
            <person name="Willey D.L."/>
            <person name="Williams H."/>
            <person name="Wilming L."/>
            <person name="Wray P.W."/>
            <person name="Wu Z."/>
            <person name="Coulson A."/>
            <person name="Vaudin M."/>
            <person name="Sulston J.E."/>
            <person name="Durbin R.M."/>
            <person name="Hubbard T."/>
            <person name="Wooster R."/>
            <person name="Dunham I."/>
            <person name="Carter N.P."/>
            <person name="McVean G."/>
            <person name="Ross M.T."/>
            <person name="Harrow J."/>
            <person name="Olson M.V."/>
            <person name="Beck S."/>
            <person name="Rogers J."/>
            <person name="Bentley D.R."/>
        </authorList>
    </citation>
    <scope>NUCLEOTIDE SEQUENCE [LARGE SCALE GENOMIC DNA]</scope>
</reference>
<reference key="3">
    <citation type="journal article" date="2004" name="Genome Res.">
        <title>The status, quality, and expansion of the NIH full-length cDNA project: the Mammalian Gene Collection (MGC).</title>
        <authorList>
            <consortium name="The MGC Project Team"/>
        </authorList>
    </citation>
    <scope>NUCLEOTIDE SEQUENCE [LARGE SCALE MRNA]</scope>
    <scope>VARIANT ALA-471</scope>
    <source>
        <tissue>Brain</tissue>
        <tissue>PNS</tissue>
        <tissue>Uterus</tissue>
    </source>
</reference>
<reference key="4">
    <citation type="journal article" date="2000" name="DNA Res.">
        <title>Prediction of the coding sequences of unidentified human genes. XVI. The complete sequences of 150 new cDNA clones from brain which code for large proteins in vitro.</title>
        <authorList>
            <person name="Nagase T."/>
            <person name="Kikuno R."/>
            <person name="Ishikawa K."/>
            <person name="Hirosawa M."/>
            <person name="Ohara O."/>
        </authorList>
    </citation>
    <scope>NUCLEOTIDE SEQUENCE [LARGE SCALE MRNA] OF 67-717</scope>
    <source>
        <tissue>Brain</tissue>
    </source>
</reference>
<reference key="5">
    <citation type="journal article" date="2007" name="BMC Genomics">
        <title>The full-ORF clone resource of the German cDNA consortium.</title>
        <authorList>
            <person name="Bechtel S."/>
            <person name="Rosenfelder H."/>
            <person name="Duda A."/>
            <person name="Schmidt C.P."/>
            <person name="Ernst U."/>
            <person name="Wellenreuther R."/>
            <person name="Mehrle A."/>
            <person name="Schuster C."/>
            <person name="Bahr A."/>
            <person name="Bloecker H."/>
            <person name="Heubner D."/>
            <person name="Hoerlein A."/>
            <person name="Michel G."/>
            <person name="Wedler H."/>
            <person name="Koehrer K."/>
            <person name="Ottenwaelder B."/>
            <person name="Poustka A."/>
            <person name="Wiemann S."/>
            <person name="Schupp I."/>
        </authorList>
    </citation>
    <scope>NUCLEOTIDE SEQUENCE [LARGE SCALE MRNA] OF 352-717</scope>
    <scope>VARIANT ALA-471</scope>
    <source>
        <tissue>Melanoma</tissue>
    </source>
</reference>
<reference key="6">
    <citation type="journal article" date="2008" name="Proc. Natl. Acad. Sci. U.S.A.">
        <title>A quantitative atlas of mitotic phosphorylation.</title>
        <authorList>
            <person name="Dephoure N."/>
            <person name="Zhou C."/>
            <person name="Villen J."/>
            <person name="Beausoleil S.A."/>
            <person name="Bakalarski C.E."/>
            <person name="Elledge S.J."/>
            <person name="Gygi S.P."/>
        </authorList>
    </citation>
    <scope>PHOSPHORYLATION [LARGE SCALE ANALYSIS] AT SER-365; SER-373 AND THR-378</scope>
    <scope>IDENTIFICATION BY MASS SPECTROMETRY [LARGE SCALE ANALYSIS]</scope>
    <source>
        <tissue>Cervix carcinoma</tissue>
    </source>
</reference>
<reference key="7">
    <citation type="journal article" date="2009" name="Proc. Natl. Acad. Sci. U.S.A.">
        <title>JFK, a Kelch domain-containing F-box protein, links the SCF complex to p53 regulation.</title>
        <authorList>
            <person name="Sun L."/>
            <person name="Shi L."/>
            <person name="Li W."/>
            <person name="Yu W."/>
            <person name="Liang J."/>
            <person name="Zhang H."/>
            <person name="Yang X."/>
            <person name="Wang Y."/>
            <person name="Li R."/>
            <person name="Yao X."/>
            <person name="Yi X."/>
            <person name="Shang Y."/>
        </authorList>
    </citation>
    <scope>FUNCTION</scope>
    <scope>IDENTIFICATION IN THE SCF COMPLEX</scope>
    <scope>INTERACTION WITH TP53</scope>
</reference>
<reference key="8">
    <citation type="journal article" date="2009" name="Sci. Signal.">
        <title>Quantitative phosphoproteomic analysis of T cell receptor signaling reveals system-wide modulation of protein-protein interactions.</title>
        <authorList>
            <person name="Mayya V."/>
            <person name="Lundgren D.H."/>
            <person name="Hwang S.-I."/>
            <person name="Rezaul K."/>
            <person name="Wu L."/>
            <person name="Eng J.K."/>
            <person name="Rodionov V."/>
            <person name="Han D.K."/>
        </authorList>
    </citation>
    <scope>PHOSPHORYLATION [LARGE SCALE ANALYSIS] AT SER-373</scope>
    <scope>IDENTIFICATION BY MASS SPECTROMETRY [LARGE SCALE ANALYSIS]</scope>
    <source>
        <tissue>Leukemic T-cell</tissue>
    </source>
</reference>
<reference key="9">
    <citation type="journal article" date="2010" name="Sci. Signal.">
        <title>Quantitative phosphoproteomics reveals widespread full phosphorylation site occupancy during mitosis.</title>
        <authorList>
            <person name="Olsen J.V."/>
            <person name="Vermeulen M."/>
            <person name="Santamaria A."/>
            <person name="Kumar C."/>
            <person name="Miller M.L."/>
            <person name="Jensen L.J."/>
            <person name="Gnad F."/>
            <person name="Cox J."/>
            <person name="Jensen T.S."/>
            <person name="Nigg E.A."/>
            <person name="Brunak S."/>
            <person name="Mann M."/>
        </authorList>
    </citation>
    <scope>PHOSPHORYLATION [LARGE SCALE ANALYSIS] AT SER-552</scope>
    <scope>IDENTIFICATION BY MASS SPECTROMETRY [LARGE SCALE ANALYSIS]</scope>
    <source>
        <tissue>Cervix carcinoma</tissue>
    </source>
</reference>
<reference key="10">
    <citation type="journal article" date="2013" name="J. Proteome Res.">
        <title>Toward a comprehensive characterization of a human cancer cell phosphoproteome.</title>
        <authorList>
            <person name="Zhou H."/>
            <person name="Di Palma S."/>
            <person name="Preisinger C."/>
            <person name="Peng M."/>
            <person name="Polat A.N."/>
            <person name="Heck A.J."/>
            <person name="Mohammed S."/>
        </authorList>
    </citation>
    <scope>PHOSPHORYLATION [LARGE SCALE ANALYSIS] AT SER-365 AND SER-373</scope>
    <scope>IDENTIFICATION BY MASS SPECTROMETRY [LARGE SCALE ANALYSIS]</scope>
    <source>
        <tissue>Erythroleukemia</tissue>
    </source>
</reference>
<proteinExistence type="evidence at protein level"/>
<protein>
    <recommendedName>
        <fullName>F-box only protein 42</fullName>
    </recommendedName>
    <alternativeName>
        <fullName>Just one F-box and Kelch domain-containing protein</fullName>
    </alternativeName>
</protein>
<gene>
    <name type="primary">FBXO42</name>
    <name type="synonym">FBX42</name>
    <name type="synonym">JFK</name>
    <name type="synonym">KIAA1332</name>
</gene>
<keyword id="KW-0880">Kelch repeat</keyword>
<keyword id="KW-0597">Phosphoprotein</keyword>
<keyword id="KW-1267">Proteomics identification</keyword>
<keyword id="KW-1185">Reference proteome</keyword>
<keyword id="KW-0677">Repeat</keyword>
<keyword id="KW-0833">Ubl conjugation pathway</keyword>